<proteinExistence type="inferred from homology"/>
<reference key="1">
    <citation type="journal article" date="2007" name="Photosyn. Res.">
        <title>Complete nucleotide sequence of the freshwater unicellular cyanobacterium Synechococcus elongatus PCC 6301 chromosome: gene content and organization.</title>
        <authorList>
            <person name="Sugita C."/>
            <person name="Ogata K."/>
            <person name="Shikata M."/>
            <person name="Jikuya H."/>
            <person name="Takano J."/>
            <person name="Furumichi M."/>
            <person name="Kanehisa M."/>
            <person name="Omata T."/>
            <person name="Sugiura M."/>
            <person name="Sugita M."/>
        </authorList>
    </citation>
    <scope>NUCLEOTIDE SEQUENCE [LARGE SCALE GENOMIC DNA]</scope>
    <source>
        <strain>ATCC 27144 / PCC 6301 / SAUG 1402/1</strain>
    </source>
</reference>
<dbReference type="EC" id="2.5.1.75" evidence="1"/>
<dbReference type="EMBL" id="AP008231">
    <property type="protein sequence ID" value="BAD79806.1"/>
    <property type="molecule type" value="Genomic_DNA"/>
</dbReference>
<dbReference type="RefSeq" id="WP_011243926.1">
    <property type="nucleotide sequence ID" value="NC_006576.1"/>
</dbReference>
<dbReference type="SMR" id="Q5N1L4"/>
<dbReference type="KEGG" id="syc:syc1616_d"/>
<dbReference type="eggNOG" id="COG0324">
    <property type="taxonomic scope" value="Bacteria"/>
</dbReference>
<dbReference type="Proteomes" id="UP000001175">
    <property type="component" value="Chromosome"/>
</dbReference>
<dbReference type="GO" id="GO:0005524">
    <property type="term" value="F:ATP binding"/>
    <property type="evidence" value="ECO:0007669"/>
    <property type="project" value="UniProtKB-UniRule"/>
</dbReference>
<dbReference type="GO" id="GO:0052381">
    <property type="term" value="F:tRNA dimethylallyltransferase activity"/>
    <property type="evidence" value="ECO:0007669"/>
    <property type="project" value="UniProtKB-UniRule"/>
</dbReference>
<dbReference type="GO" id="GO:0006400">
    <property type="term" value="P:tRNA modification"/>
    <property type="evidence" value="ECO:0007669"/>
    <property type="project" value="TreeGrafter"/>
</dbReference>
<dbReference type="Gene3D" id="1.10.20.140">
    <property type="match status" value="1"/>
</dbReference>
<dbReference type="Gene3D" id="3.40.50.300">
    <property type="entry name" value="P-loop containing nucleotide triphosphate hydrolases"/>
    <property type="match status" value="1"/>
</dbReference>
<dbReference type="HAMAP" id="MF_00185">
    <property type="entry name" value="IPP_trans"/>
    <property type="match status" value="1"/>
</dbReference>
<dbReference type="InterPro" id="IPR039657">
    <property type="entry name" value="Dimethylallyltransferase"/>
</dbReference>
<dbReference type="InterPro" id="IPR018022">
    <property type="entry name" value="IPT"/>
</dbReference>
<dbReference type="InterPro" id="IPR027417">
    <property type="entry name" value="P-loop_NTPase"/>
</dbReference>
<dbReference type="NCBIfam" id="TIGR00174">
    <property type="entry name" value="miaA"/>
    <property type="match status" value="1"/>
</dbReference>
<dbReference type="PANTHER" id="PTHR11088">
    <property type="entry name" value="TRNA DIMETHYLALLYLTRANSFERASE"/>
    <property type="match status" value="1"/>
</dbReference>
<dbReference type="PANTHER" id="PTHR11088:SF60">
    <property type="entry name" value="TRNA DIMETHYLALLYLTRANSFERASE"/>
    <property type="match status" value="1"/>
</dbReference>
<dbReference type="Pfam" id="PF01715">
    <property type="entry name" value="IPPT"/>
    <property type="match status" value="1"/>
</dbReference>
<dbReference type="SUPFAM" id="SSF52540">
    <property type="entry name" value="P-loop containing nucleoside triphosphate hydrolases"/>
    <property type="match status" value="1"/>
</dbReference>
<keyword id="KW-0067">ATP-binding</keyword>
<keyword id="KW-0460">Magnesium</keyword>
<keyword id="KW-0547">Nucleotide-binding</keyword>
<keyword id="KW-0808">Transferase</keyword>
<keyword id="KW-0819">tRNA processing</keyword>
<organism>
    <name type="scientific">Synechococcus sp. (strain ATCC 27144 / PCC 6301 / SAUG 1402/1)</name>
    <name type="common">Anacystis nidulans</name>
    <dbReference type="NCBI Taxonomy" id="269084"/>
    <lineage>
        <taxon>Bacteria</taxon>
        <taxon>Bacillati</taxon>
        <taxon>Cyanobacteriota</taxon>
        <taxon>Cyanophyceae</taxon>
        <taxon>Synechococcales</taxon>
        <taxon>Synechococcaceae</taxon>
        <taxon>Synechococcus</taxon>
    </lineage>
</organism>
<sequence length="306" mass="34260">MESRLKPGLIVLCGPTAAGKSSLAIAIAQRLGSPILSADSRLVYRDFNIGTAKPTPAEQQQVPHYLMDLCDPRQVFTVGDYQDCAVPLIQQLQEKGMLPLLVGGTGLYIKAIVNGLRFPRIAPQPKLRSQLQALGQPLCHALLQRVDPVAGDRIHVNDRVRTLRALEVFYVSGDRLTDLQQEQPPSYPILQIGLDSDRLEARIQQRTQQMLTSGFVEEVQGLCDRYGSDLPLLNTLGYRQVCAFLQGSLSRSELPEQIVLQTRQYAKQQRTWFRADSSIQWIDAEAGNRLERALDLIERFRKSEGV</sequence>
<feature type="chain" id="PRO_0000163993" description="tRNA dimethylallyltransferase">
    <location>
        <begin position="1"/>
        <end position="306"/>
    </location>
</feature>
<feature type="region of interest" description="Interaction with substrate tRNA" evidence="1">
    <location>
        <begin position="39"/>
        <end position="42"/>
    </location>
</feature>
<feature type="binding site" evidence="1">
    <location>
        <begin position="14"/>
        <end position="21"/>
    </location>
    <ligand>
        <name>ATP</name>
        <dbReference type="ChEBI" id="CHEBI:30616"/>
    </ligand>
</feature>
<feature type="binding site" evidence="1">
    <location>
        <begin position="16"/>
        <end position="21"/>
    </location>
    <ligand>
        <name>substrate</name>
    </ligand>
</feature>
<feature type="site" description="Interaction with substrate tRNA" evidence="1">
    <location>
        <position position="105"/>
    </location>
</feature>
<comment type="function">
    <text evidence="1">Catalyzes the transfer of a dimethylallyl group onto the adenine at position 37 in tRNAs that read codons beginning with uridine, leading to the formation of N6-(dimethylallyl)adenosine (i(6)A).</text>
</comment>
<comment type="catalytic activity">
    <reaction evidence="1">
        <text>adenosine(37) in tRNA + dimethylallyl diphosphate = N(6)-dimethylallyladenosine(37) in tRNA + diphosphate</text>
        <dbReference type="Rhea" id="RHEA:26482"/>
        <dbReference type="Rhea" id="RHEA-COMP:10162"/>
        <dbReference type="Rhea" id="RHEA-COMP:10375"/>
        <dbReference type="ChEBI" id="CHEBI:33019"/>
        <dbReference type="ChEBI" id="CHEBI:57623"/>
        <dbReference type="ChEBI" id="CHEBI:74411"/>
        <dbReference type="ChEBI" id="CHEBI:74415"/>
        <dbReference type="EC" id="2.5.1.75"/>
    </reaction>
</comment>
<comment type="cofactor">
    <cofactor evidence="1">
        <name>Mg(2+)</name>
        <dbReference type="ChEBI" id="CHEBI:18420"/>
    </cofactor>
</comment>
<comment type="subunit">
    <text evidence="1">Monomer.</text>
</comment>
<comment type="similarity">
    <text evidence="1">Belongs to the IPP transferase family.</text>
</comment>
<gene>
    <name evidence="1" type="primary">miaA</name>
    <name type="ordered locus">syc1616_d</name>
</gene>
<protein>
    <recommendedName>
        <fullName evidence="1">tRNA dimethylallyltransferase</fullName>
        <ecNumber evidence="1">2.5.1.75</ecNumber>
    </recommendedName>
    <alternativeName>
        <fullName evidence="1">Dimethylallyl diphosphate:tRNA dimethylallyltransferase</fullName>
        <shortName evidence="1">DMAPP:tRNA dimethylallyltransferase</shortName>
        <shortName evidence="1">DMATase</shortName>
    </alternativeName>
    <alternativeName>
        <fullName evidence="1">Isopentenyl-diphosphate:tRNA isopentenyltransferase</fullName>
        <shortName evidence="1">IPP transferase</shortName>
        <shortName evidence="1">IPPT</shortName>
        <shortName evidence="1">IPTase</shortName>
    </alternativeName>
</protein>
<name>MIAA_SYNP6</name>
<accession>Q5N1L4</accession>
<evidence type="ECO:0000255" key="1">
    <source>
        <dbReference type="HAMAP-Rule" id="MF_00185"/>
    </source>
</evidence>